<sequence>MHIRILGSAAGGGFPQWNCNCRNCRGVRDGSVAAQPRTQSSIALSDEGERWILCNASPDIRAQIAAFPALQPARRPRDTAIGAIVLLDSQIDHTTGLLSLREGCPHEVWCTQMVHQDLSEGFPLFPMLSHWNGGLRHRPIALDGEPFAIPACPRLRFTAIPLRSSAPPYSPHRGDPHPGDNIGLFVEDLDSAGTLFYAPGLGEVDEALLEWMRRADCLLVDGTLWRDDEMLVCEVGDKLGRQMGHLAQSGPGGMLEVLAKVPAARKVLIHINNTNPILDTASAERAELDASGIEVAWDGMHIQL</sequence>
<organism>
    <name type="scientific">Pseudomonas aeruginosa (strain LESB58)</name>
    <dbReference type="NCBI Taxonomy" id="557722"/>
    <lineage>
        <taxon>Bacteria</taxon>
        <taxon>Pseudomonadati</taxon>
        <taxon>Pseudomonadota</taxon>
        <taxon>Gammaproteobacteria</taxon>
        <taxon>Pseudomonadales</taxon>
        <taxon>Pseudomonadaceae</taxon>
        <taxon>Pseudomonas</taxon>
    </lineage>
</organism>
<accession>B7VAB9</accession>
<gene>
    <name evidence="1" type="primary">pqqB</name>
    <name type="ordered locus">PLES_33371</name>
</gene>
<proteinExistence type="inferred from homology"/>
<feature type="chain" id="PRO_1000131167" description="Coenzyme PQQ synthesis protein B">
    <location>
        <begin position="1"/>
        <end position="304"/>
    </location>
</feature>
<evidence type="ECO:0000255" key="1">
    <source>
        <dbReference type="HAMAP-Rule" id="MF_00653"/>
    </source>
</evidence>
<reference key="1">
    <citation type="journal article" date="2009" name="Genome Res.">
        <title>Newly introduced genomic prophage islands are critical determinants of in vivo competitiveness in the Liverpool epidemic strain of Pseudomonas aeruginosa.</title>
        <authorList>
            <person name="Winstanley C."/>
            <person name="Langille M.G.I."/>
            <person name="Fothergill J.L."/>
            <person name="Kukavica-Ibrulj I."/>
            <person name="Paradis-Bleau C."/>
            <person name="Sanschagrin F."/>
            <person name="Thomson N.R."/>
            <person name="Winsor G.L."/>
            <person name="Quail M.A."/>
            <person name="Lennard N."/>
            <person name="Bignell A."/>
            <person name="Clarke L."/>
            <person name="Seeger K."/>
            <person name="Saunders D."/>
            <person name="Harris D."/>
            <person name="Parkhill J."/>
            <person name="Hancock R.E.W."/>
            <person name="Brinkman F.S.L."/>
            <person name="Levesque R.C."/>
        </authorList>
    </citation>
    <scope>NUCLEOTIDE SEQUENCE [LARGE SCALE GENOMIC DNA]</scope>
    <source>
        <strain>LESB58</strain>
    </source>
</reference>
<protein>
    <recommendedName>
        <fullName evidence="1">Coenzyme PQQ synthesis protein B</fullName>
    </recommendedName>
    <alternativeName>
        <fullName evidence="1">Pyrroloquinoline quinone biosynthesis protein B</fullName>
    </alternativeName>
</protein>
<name>PQQB_PSEA8</name>
<keyword id="KW-0884">PQQ biosynthesis</keyword>
<keyword id="KW-0813">Transport</keyword>
<dbReference type="EMBL" id="FM209186">
    <property type="protein sequence ID" value="CAW28064.1"/>
    <property type="molecule type" value="Genomic_DNA"/>
</dbReference>
<dbReference type="RefSeq" id="WP_003144386.1">
    <property type="nucleotide sequence ID" value="NC_011770.1"/>
</dbReference>
<dbReference type="SMR" id="B7VAB9"/>
<dbReference type="KEGG" id="pag:PLES_33371"/>
<dbReference type="HOGENOM" id="CLU_061120_0_0_6"/>
<dbReference type="UniPathway" id="UPA00539"/>
<dbReference type="GO" id="GO:0018189">
    <property type="term" value="P:pyrroloquinoline quinone biosynthetic process"/>
    <property type="evidence" value="ECO:0007669"/>
    <property type="project" value="UniProtKB-UniRule"/>
</dbReference>
<dbReference type="CDD" id="cd16274">
    <property type="entry name" value="PQQB-like_MBL-fold"/>
    <property type="match status" value="1"/>
</dbReference>
<dbReference type="Gene3D" id="3.60.15.10">
    <property type="entry name" value="Ribonuclease Z/Hydroxyacylglutathione hydrolase-like"/>
    <property type="match status" value="1"/>
</dbReference>
<dbReference type="HAMAP" id="MF_00653">
    <property type="entry name" value="PQQ_syn_PqqB"/>
    <property type="match status" value="1"/>
</dbReference>
<dbReference type="InterPro" id="IPR001279">
    <property type="entry name" value="Metallo-B-lactamas"/>
</dbReference>
<dbReference type="InterPro" id="IPR011842">
    <property type="entry name" value="PQQ_synth_PqqB"/>
</dbReference>
<dbReference type="InterPro" id="IPR036866">
    <property type="entry name" value="RibonucZ/Hydroxyglut_hydro"/>
</dbReference>
<dbReference type="NCBIfam" id="TIGR02108">
    <property type="entry name" value="PQQ_syn_pqqB"/>
    <property type="match status" value="1"/>
</dbReference>
<dbReference type="PANTHER" id="PTHR42663:SF7">
    <property type="entry name" value="COENZYME PQQ SYNTHESIS PROTEIN B"/>
    <property type="match status" value="1"/>
</dbReference>
<dbReference type="PANTHER" id="PTHR42663">
    <property type="entry name" value="HYDROLASE C777.06C-RELATED-RELATED"/>
    <property type="match status" value="1"/>
</dbReference>
<dbReference type="Pfam" id="PF12706">
    <property type="entry name" value="Lactamase_B_2"/>
    <property type="match status" value="1"/>
</dbReference>
<dbReference type="SUPFAM" id="SSF56281">
    <property type="entry name" value="Metallo-hydrolase/oxidoreductase"/>
    <property type="match status" value="1"/>
</dbReference>
<comment type="function">
    <text evidence="1">May be involved in the transport of PQQ or its precursor to the periplasm.</text>
</comment>
<comment type="pathway">
    <text evidence="1">Cofactor biosynthesis; pyrroloquinoline quinone biosynthesis.</text>
</comment>
<comment type="similarity">
    <text evidence="1">Belongs to the PqqB family.</text>
</comment>